<feature type="chain" id="PRO_1000202076" description="Phospho-N-acetylmuramoyl-pentapeptide-transferase">
    <location>
        <begin position="1"/>
        <end position="361"/>
    </location>
</feature>
<feature type="transmembrane region" description="Helical" evidence="1">
    <location>
        <begin position="28"/>
        <end position="48"/>
    </location>
</feature>
<feature type="transmembrane region" description="Helical" evidence="1">
    <location>
        <begin position="74"/>
        <end position="94"/>
    </location>
</feature>
<feature type="transmembrane region" description="Helical" evidence="1">
    <location>
        <begin position="99"/>
        <end position="119"/>
    </location>
</feature>
<feature type="transmembrane region" description="Helical" evidence="1">
    <location>
        <begin position="133"/>
        <end position="153"/>
    </location>
</feature>
<feature type="transmembrane region" description="Helical" evidence="1">
    <location>
        <begin position="168"/>
        <end position="188"/>
    </location>
</feature>
<feature type="transmembrane region" description="Helical" evidence="1">
    <location>
        <begin position="203"/>
        <end position="223"/>
    </location>
</feature>
<feature type="transmembrane region" description="Helical" evidence="1">
    <location>
        <begin position="236"/>
        <end position="256"/>
    </location>
</feature>
<feature type="transmembrane region" description="Helical" evidence="1">
    <location>
        <begin position="263"/>
        <end position="283"/>
    </location>
</feature>
<feature type="transmembrane region" description="Helical" evidence="1">
    <location>
        <begin position="288"/>
        <end position="308"/>
    </location>
</feature>
<feature type="transmembrane region" description="Helical" evidence="1">
    <location>
        <begin position="338"/>
        <end position="358"/>
    </location>
</feature>
<protein>
    <recommendedName>
        <fullName evidence="1">Phospho-N-acetylmuramoyl-pentapeptide-transferase</fullName>
        <ecNumber evidence="1">2.7.8.13</ecNumber>
    </recommendedName>
    <alternativeName>
        <fullName evidence="1">UDP-MurNAc-pentapeptide phosphotransferase</fullName>
    </alternativeName>
</protein>
<proteinExistence type="inferred from homology"/>
<gene>
    <name evidence="1" type="primary">mraY</name>
    <name type="ordered locus">RAF_ORF0825</name>
</gene>
<dbReference type="EC" id="2.7.8.13" evidence="1"/>
<dbReference type="EMBL" id="CP001612">
    <property type="protein sequence ID" value="ACP53695.1"/>
    <property type="molecule type" value="Genomic_DNA"/>
</dbReference>
<dbReference type="RefSeq" id="WP_012719882.1">
    <property type="nucleotide sequence ID" value="NC_012633.1"/>
</dbReference>
<dbReference type="SMR" id="C3PP35"/>
<dbReference type="KEGG" id="raf:RAF_ORF0825"/>
<dbReference type="HOGENOM" id="CLU_023982_0_0_5"/>
<dbReference type="UniPathway" id="UPA00219"/>
<dbReference type="Proteomes" id="UP000002305">
    <property type="component" value="Chromosome"/>
</dbReference>
<dbReference type="GO" id="GO:0005886">
    <property type="term" value="C:plasma membrane"/>
    <property type="evidence" value="ECO:0007669"/>
    <property type="project" value="UniProtKB-SubCell"/>
</dbReference>
<dbReference type="GO" id="GO:0046872">
    <property type="term" value="F:metal ion binding"/>
    <property type="evidence" value="ECO:0007669"/>
    <property type="project" value="UniProtKB-KW"/>
</dbReference>
<dbReference type="GO" id="GO:0008963">
    <property type="term" value="F:phospho-N-acetylmuramoyl-pentapeptide-transferase activity"/>
    <property type="evidence" value="ECO:0007669"/>
    <property type="project" value="UniProtKB-UniRule"/>
</dbReference>
<dbReference type="GO" id="GO:0051992">
    <property type="term" value="F:UDP-N-acetylmuramoyl-L-alanyl-D-glutamyl-meso-2,6-diaminopimelyl-D-alanyl-D-alanine:undecaprenyl-phosphate transferase activity"/>
    <property type="evidence" value="ECO:0007669"/>
    <property type="project" value="RHEA"/>
</dbReference>
<dbReference type="GO" id="GO:0051301">
    <property type="term" value="P:cell division"/>
    <property type="evidence" value="ECO:0007669"/>
    <property type="project" value="UniProtKB-KW"/>
</dbReference>
<dbReference type="GO" id="GO:0071555">
    <property type="term" value="P:cell wall organization"/>
    <property type="evidence" value="ECO:0007669"/>
    <property type="project" value="UniProtKB-KW"/>
</dbReference>
<dbReference type="GO" id="GO:0009252">
    <property type="term" value="P:peptidoglycan biosynthetic process"/>
    <property type="evidence" value="ECO:0007669"/>
    <property type="project" value="UniProtKB-UniRule"/>
</dbReference>
<dbReference type="GO" id="GO:0008360">
    <property type="term" value="P:regulation of cell shape"/>
    <property type="evidence" value="ECO:0007669"/>
    <property type="project" value="UniProtKB-KW"/>
</dbReference>
<dbReference type="CDD" id="cd06852">
    <property type="entry name" value="GT_MraY"/>
    <property type="match status" value="1"/>
</dbReference>
<dbReference type="HAMAP" id="MF_00038">
    <property type="entry name" value="MraY"/>
    <property type="match status" value="1"/>
</dbReference>
<dbReference type="InterPro" id="IPR000715">
    <property type="entry name" value="Glycosyl_transferase_4"/>
</dbReference>
<dbReference type="InterPro" id="IPR003524">
    <property type="entry name" value="PNAcMuramoyl-5peptid_Trfase"/>
</dbReference>
<dbReference type="InterPro" id="IPR018480">
    <property type="entry name" value="PNAcMuramoyl-5peptid_Trfase_CS"/>
</dbReference>
<dbReference type="NCBIfam" id="TIGR00445">
    <property type="entry name" value="mraY"/>
    <property type="match status" value="1"/>
</dbReference>
<dbReference type="PANTHER" id="PTHR22926">
    <property type="entry name" value="PHOSPHO-N-ACETYLMURAMOYL-PENTAPEPTIDE-TRANSFERASE"/>
    <property type="match status" value="1"/>
</dbReference>
<dbReference type="PANTHER" id="PTHR22926:SF5">
    <property type="entry name" value="PHOSPHO-N-ACETYLMURAMOYL-PENTAPEPTIDE-TRANSFERASE HOMOLOG"/>
    <property type="match status" value="1"/>
</dbReference>
<dbReference type="Pfam" id="PF00953">
    <property type="entry name" value="Glycos_transf_4"/>
    <property type="match status" value="1"/>
</dbReference>
<dbReference type="PROSITE" id="PS01347">
    <property type="entry name" value="MRAY_1"/>
    <property type="match status" value="1"/>
</dbReference>
<dbReference type="PROSITE" id="PS01348">
    <property type="entry name" value="MRAY_2"/>
    <property type="match status" value="1"/>
</dbReference>
<sequence>MLYNLLLPHIHNSHIANLFHYITFRGGLAIIITLSLSFITGPILIEFLRSLQKNGQPIRSDGPESHQTKVGTPTMGGIMIILSSCLSTLLLADLTNKYIWITLFGFISFGIIGFMDDYAKVTKDNHYGVRGKSKLLLQGIISFIICVLLEYLDKSPSHLLNVPFFKNLSLDLGYCYIVFAIFVIVGSSNAVNLTDGLDGLATVPIAFTAGSFALISYLVGNLIYSNYLQLTYIPNTGELTVLCAGLVGSCLGFLWFNAQPAEVFMGDTGSLSLGGVLGIISVITKHEIVLAIVGGLFVIETASVILQVYYFKATKGKRIFKMAPLHHHFEKHGWAESKVVIRFWIISVIFALIGLSSLKLR</sequence>
<comment type="function">
    <text evidence="1">Catalyzes the initial step of the lipid cycle reactions in the biosynthesis of the cell wall peptidoglycan: transfers peptidoglycan precursor phospho-MurNAc-pentapeptide from UDP-MurNAc-pentapeptide onto the lipid carrier undecaprenyl phosphate, yielding undecaprenyl-pyrophosphoryl-MurNAc-pentapeptide, known as lipid I.</text>
</comment>
<comment type="catalytic activity">
    <reaction evidence="1">
        <text>UDP-N-acetyl-alpha-D-muramoyl-L-alanyl-gamma-D-glutamyl-meso-2,6-diaminopimeloyl-D-alanyl-D-alanine + di-trans,octa-cis-undecaprenyl phosphate = di-trans,octa-cis-undecaprenyl diphospho-N-acetyl-alpha-D-muramoyl-L-alanyl-D-glutamyl-meso-2,6-diaminopimeloyl-D-alanyl-D-alanine + UMP</text>
        <dbReference type="Rhea" id="RHEA:28386"/>
        <dbReference type="ChEBI" id="CHEBI:57865"/>
        <dbReference type="ChEBI" id="CHEBI:60392"/>
        <dbReference type="ChEBI" id="CHEBI:61386"/>
        <dbReference type="ChEBI" id="CHEBI:61387"/>
        <dbReference type="EC" id="2.7.8.13"/>
    </reaction>
</comment>
<comment type="cofactor">
    <cofactor evidence="1">
        <name>Mg(2+)</name>
        <dbReference type="ChEBI" id="CHEBI:18420"/>
    </cofactor>
</comment>
<comment type="pathway">
    <text evidence="1">Cell wall biogenesis; peptidoglycan biosynthesis.</text>
</comment>
<comment type="subcellular location">
    <subcellularLocation>
        <location evidence="1">Cell inner membrane</location>
        <topology evidence="1">Multi-pass membrane protein</topology>
    </subcellularLocation>
</comment>
<comment type="similarity">
    <text evidence="1">Belongs to the glycosyltransferase 4 family. MraY subfamily.</text>
</comment>
<evidence type="ECO:0000255" key="1">
    <source>
        <dbReference type="HAMAP-Rule" id="MF_00038"/>
    </source>
</evidence>
<accession>C3PP35</accession>
<keyword id="KW-0131">Cell cycle</keyword>
<keyword id="KW-0132">Cell division</keyword>
<keyword id="KW-0997">Cell inner membrane</keyword>
<keyword id="KW-1003">Cell membrane</keyword>
<keyword id="KW-0133">Cell shape</keyword>
<keyword id="KW-0961">Cell wall biogenesis/degradation</keyword>
<keyword id="KW-0460">Magnesium</keyword>
<keyword id="KW-0472">Membrane</keyword>
<keyword id="KW-0479">Metal-binding</keyword>
<keyword id="KW-0573">Peptidoglycan synthesis</keyword>
<keyword id="KW-0808">Transferase</keyword>
<keyword id="KW-0812">Transmembrane</keyword>
<keyword id="KW-1133">Transmembrane helix</keyword>
<reference key="1">
    <citation type="journal article" date="2009" name="BMC Genomics">
        <title>Analysis of the Rickettsia africae genome reveals that virulence acquisition in Rickettsia species may be explained by genome reduction.</title>
        <authorList>
            <person name="Fournier P.-E."/>
            <person name="El Karkouri K."/>
            <person name="Leroy Q."/>
            <person name="Robert C."/>
            <person name="Giumelli B."/>
            <person name="Renesto P."/>
            <person name="Socolovschi C."/>
            <person name="Parola P."/>
            <person name="Audic S."/>
            <person name="Raoult D."/>
        </authorList>
    </citation>
    <scope>NUCLEOTIDE SEQUENCE [LARGE SCALE GENOMIC DNA]</scope>
    <source>
        <strain>ESF-5</strain>
    </source>
</reference>
<organism>
    <name type="scientific">Rickettsia africae (strain ESF-5)</name>
    <dbReference type="NCBI Taxonomy" id="347255"/>
    <lineage>
        <taxon>Bacteria</taxon>
        <taxon>Pseudomonadati</taxon>
        <taxon>Pseudomonadota</taxon>
        <taxon>Alphaproteobacteria</taxon>
        <taxon>Rickettsiales</taxon>
        <taxon>Rickettsiaceae</taxon>
        <taxon>Rickettsieae</taxon>
        <taxon>Rickettsia</taxon>
        <taxon>spotted fever group</taxon>
    </lineage>
</organism>
<name>MRAY_RICAE</name>